<feature type="propeptide" id="PRO_0000275355" evidence="1">
    <location>
        <begin position="1"/>
        <end position="2"/>
    </location>
</feature>
<feature type="chain" id="PRO_0000275356" description="Ribulose bisphosphate carboxylase large chain">
    <location>
        <begin position="3"/>
        <end position="475"/>
    </location>
</feature>
<feature type="active site" description="Proton acceptor" evidence="1">
    <location>
        <position position="175"/>
    </location>
</feature>
<feature type="active site" description="Proton acceptor" evidence="1">
    <location>
        <position position="294"/>
    </location>
</feature>
<feature type="binding site" description="in homodimeric partner" evidence="1">
    <location>
        <position position="123"/>
    </location>
    <ligand>
        <name>substrate</name>
    </ligand>
</feature>
<feature type="binding site" evidence="1">
    <location>
        <position position="173"/>
    </location>
    <ligand>
        <name>substrate</name>
    </ligand>
</feature>
<feature type="binding site" evidence="1">
    <location>
        <position position="177"/>
    </location>
    <ligand>
        <name>substrate</name>
    </ligand>
</feature>
<feature type="binding site" description="via carbamate group" evidence="1">
    <location>
        <position position="201"/>
    </location>
    <ligand>
        <name>Mg(2+)</name>
        <dbReference type="ChEBI" id="CHEBI:18420"/>
    </ligand>
</feature>
<feature type="binding site" evidence="1">
    <location>
        <position position="203"/>
    </location>
    <ligand>
        <name>Mg(2+)</name>
        <dbReference type="ChEBI" id="CHEBI:18420"/>
    </ligand>
</feature>
<feature type="binding site" evidence="1">
    <location>
        <position position="204"/>
    </location>
    <ligand>
        <name>Mg(2+)</name>
        <dbReference type="ChEBI" id="CHEBI:18420"/>
    </ligand>
</feature>
<feature type="binding site" evidence="1">
    <location>
        <position position="295"/>
    </location>
    <ligand>
        <name>substrate</name>
    </ligand>
</feature>
<feature type="binding site" evidence="1">
    <location>
        <position position="327"/>
    </location>
    <ligand>
        <name>substrate</name>
    </ligand>
</feature>
<feature type="binding site" evidence="1">
    <location>
        <position position="379"/>
    </location>
    <ligand>
        <name>substrate</name>
    </ligand>
</feature>
<feature type="site" description="Transition state stabilizer" evidence="1">
    <location>
        <position position="334"/>
    </location>
</feature>
<feature type="modified residue" description="N-acetylproline" evidence="1">
    <location>
        <position position="3"/>
    </location>
</feature>
<feature type="modified residue" description="N6,N6,N6-trimethyllysine" evidence="1">
    <location>
        <position position="14"/>
    </location>
</feature>
<feature type="modified residue" description="N6-carboxylysine" evidence="1">
    <location>
        <position position="201"/>
    </location>
</feature>
<feature type="disulfide bond" description="Interchain; in linked form" evidence="1">
    <location>
        <position position="247"/>
    </location>
</feature>
<reference key="1">
    <citation type="journal article" date="2006" name="BMC Plant Biol.">
        <title>The complete chloroplast genome sequence of Citrus sinensis (L.) Osbeck var 'Ridge Pineapple': organization and phylogenetic relationships to other angiosperms.</title>
        <authorList>
            <person name="Bausher M.G."/>
            <person name="Singh N.D."/>
            <person name="Lee S.-B."/>
            <person name="Jansen R.K."/>
            <person name="Daniell H."/>
        </authorList>
    </citation>
    <scope>NUCLEOTIDE SEQUENCE [LARGE SCALE GENOMIC DNA]</scope>
    <source>
        <strain>cv. Osbeck var. Ridge Pineapple</strain>
    </source>
</reference>
<geneLocation type="chloroplast"/>
<gene>
    <name evidence="1" type="primary">rbcL</name>
</gene>
<protein>
    <recommendedName>
        <fullName evidence="1">Ribulose bisphosphate carboxylase large chain</fullName>
        <shortName evidence="1">RuBisCO large subunit</shortName>
        <ecNumber evidence="1">4.1.1.39</ecNumber>
    </recommendedName>
</protein>
<keyword id="KW-0007">Acetylation</keyword>
<keyword id="KW-0113">Calvin cycle</keyword>
<keyword id="KW-0120">Carbon dioxide fixation</keyword>
<keyword id="KW-0150">Chloroplast</keyword>
<keyword id="KW-1015">Disulfide bond</keyword>
<keyword id="KW-0456">Lyase</keyword>
<keyword id="KW-0460">Magnesium</keyword>
<keyword id="KW-0479">Metal-binding</keyword>
<keyword id="KW-0488">Methylation</keyword>
<keyword id="KW-0503">Monooxygenase</keyword>
<keyword id="KW-0560">Oxidoreductase</keyword>
<keyword id="KW-0601">Photorespiration</keyword>
<keyword id="KW-0602">Photosynthesis</keyword>
<keyword id="KW-0934">Plastid</keyword>
<proteinExistence type="inferred from homology"/>
<evidence type="ECO:0000255" key="1">
    <source>
        <dbReference type="HAMAP-Rule" id="MF_01338"/>
    </source>
</evidence>
<dbReference type="EC" id="4.1.1.39" evidence="1"/>
<dbReference type="EMBL" id="DQ864733">
    <property type="protein sequence ID" value="ABI49028.1"/>
    <property type="molecule type" value="Genomic_DNA"/>
</dbReference>
<dbReference type="RefSeq" id="YP_740483.1">
    <property type="nucleotide sequence ID" value="NC_008334.1"/>
</dbReference>
<dbReference type="SMR" id="Q09MH0"/>
<dbReference type="GeneID" id="4271213"/>
<dbReference type="KEGG" id="cit:4271213"/>
<dbReference type="OrthoDB" id="896185at71240"/>
<dbReference type="GO" id="GO:0009507">
    <property type="term" value="C:chloroplast"/>
    <property type="evidence" value="ECO:0007669"/>
    <property type="project" value="UniProtKB-SubCell"/>
</dbReference>
<dbReference type="GO" id="GO:0000287">
    <property type="term" value="F:magnesium ion binding"/>
    <property type="evidence" value="ECO:0007669"/>
    <property type="project" value="UniProtKB-UniRule"/>
</dbReference>
<dbReference type="GO" id="GO:0004497">
    <property type="term" value="F:monooxygenase activity"/>
    <property type="evidence" value="ECO:0007669"/>
    <property type="project" value="UniProtKB-KW"/>
</dbReference>
<dbReference type="GO" id="GO:0016984">
    <property type="term" value="F:ribulose-bisphosphate carboxylase activity"/>
    <property type="evidence" value="ECO:0007669"/>
    <property type="project" value="UniProtKB-UniRule"/>
</dbReference>
<dbReference type="GO" id="GO:0009853">
    <property type="term" value="P:photorespiration"/>
    <property type="evidence" value="ECO:0007669"/>
    <property type="project" value="UniProtKB-KW"/>
</dbReference>
<dbReference type="GO" id="GO:0019253">
    <property type="term" value="P:reductive pentose-phosphate cycle"/>
    <property type="evidence" value="ECO:0007669"/>
    <property type="project" value="UniProtKB-UniRule"/>
</dbReference>
<dbReference type="CDD" id="cd08212">
    <property type="entry name" value="RuBisCO_large_I"/>
    <property type="match status" value="1"/>
</dbReference>
<dbReference type="FunFam" id="3.20.20.110:FF:000001">
    <property type="entry name" value="Ribulose bisphosphate carboxylase large chain"/>
    <property type="match status" value="1"/>
</dbReference>
<dbReference type="FunFam" id="3.30.70.150:FF:000001">
    <property type="entry name" value="Ribulose bisphosphate carboxylase large chain"/>
    <property type="match status" value="1"/>
</dbReference>
<dbReference type="Gene3D" id="3.20.20.110">
    <property type="entry name" value="Ribulose bisphosphate carboxylase, large subunit, C-terminal domain"/>
    <property type="match status" value="1"/>
</dbReference>
<dbReference type="Gene3D" id="3.30.70.150">
    <property type="entry name" value="RuBisCO large subunit, N-terminal domain"/>
    <property type="match status" value="1"/>
</dbReference>
<dbReference type="HAMAP" id="MF_01338">
    <property type="entry name" value="RuBisCO_L_type1"/>
    <property type="match status" value="1"/>
</dbReference>
<dbReference type="InterPro" id="IPR033966">
    <property type="entry name" value="RuBisCO"/>
</dbReference>
<dbReference type="InterPro" id="IPR020878">
    <property type="entry name" value="RuBisCo_large_chain_AS"/>
</dbReference>
<dbReference type="InterPro" id="IPR000685">
    <property type="entry name" value="RuBisCO_lsu_C"/>
</dbReference>
<dbReference type="InterPro" id="IPR036376">
    <property type="entry name" value="RuBisCO_lsu_C_sf"/>
</dbReference>
<dbReference type="InterPro" id="IPR017443">
    <property type="entry name" value="RuBisCO_lsu_fd_N"/>
</dbReference>
<dbReference type="InterPro" id="IPR036422">
    <property type="entry name" value="RuBisCO_lsu_N_sf"/>
</dbReference>
<dbReference type="InterPro" id="IPR020888">
    <property type="entry name" value="RuBisCO_lsuI"/>
</dbReference>
<dbReference type="NCBIfam" id="NF003252">
    <property type="entry name" value="PRK04208.1"/>
    <property type="match status" value="1"/>
</dbReference>
<dbReference type="PANTHER" id="PTHR42704">
    <property type="entry name" value="RIBULOSE BISPHOSPHATE CARBOXYLASE"/>
    <property type="match status" value="1"/>
</dbReference>
<dbReference type="PANTHER" id="PTHR42704:SF15">
    <property type="entry name" value="RIBULOSE BISPHOSPHATE CARBOXYLASE LARGE CHAIN"/>
    <property type="match status" value="1"/>
</dbReference>
<dbReference type="Pfam" id="PF00016">
    <property type="entry name" value="RuBisCO_large"/>
    <property type="match status" value="1"/>
</dbReference>
<dbReference type="Pfam" id="PF02788">
    <property type="entry name" value="RuBisCO_large_N"/>
    <property type="match status" value="1"/>
</dbReference>
<dbReference type="SFLD" id="SFLDG01052">
    <property type="entry name" value="RuBisCO"/>
    <property type="match status" value="1"/>
</dbReference>
<dbReference type="SFLD" id="SFLDS00014">
    <property type="entry name" value="RuBisCO"/>
    <property type="match status" value="1"/>
</dbReference>
<dbReference type="SFLD" id="SFLDG00301">
    <property type="entry name" value="RuBisCO-like_proteins"/>
    <property type="match status" value="1"/>
</dbReference>
<dbReference type="SUPFAM" id="SSF51649">
    <property type="entry name" value="RuBisCo, C-terminal domain"/>
    <property type="match status" value="1"/>
</dbReference>
<dbReference type="SUPFAM" id="SSF54966">
    <property type="entry name" value="RuBisCO, large subunit, small (N-terminal) domain"/>
    <property type="match status" value="1"/>
</dbReference>
<dbReference type="PROSITE" id="PS00157">
    <property type="entry name" value="RUBISCO_LARGE"/>
    <property type="match status" value="1"/>
</dbReference>
<accession>Q09MH0</accession>
<name>RBL_CITSI</name>
<organism>
    <name type="scientific">Citrus sinensis</name>
    <name type="common">Sweet orange</name>
    <name type="synonym">Citrus aurantium var. sinensis</name>
    <dbReference type="NCBI Taxonomy" id="2711"/>
    <lineage>
        <taxon>Eukaryota</taxon>
        <taxon>Viridiplantae</taxon>
        <taxon>Streptophyta</taxon>
        <taxon>Embryophyta</taxon>
        <taxon>Tracheophyta</taxon>
        <taxon>Spermatophyta</taxon>
        <taxon>Magnoliopsida</taxon>
        <taxon>eudicotyledons</taxon>
        <taxon>Gunneridae</taxon>
        <taxon>Pentapetalae</taxon>
        <taxon>rosids</taxon>
        <taxon>malvids</taxon>
        <taxon>Sapindales</taxon>
        <taxon>Rutaceae</taxon>
        <taxon>Aurantioideae</taxon>
        <taxon>Citrus</taxon>
    </lineage>
</organism>
<sequence>MSPQTETKASVGFKAGVKDYKLTYYTPDYVTKDTDILAAFRVTPQPGVPPEEAGAAVAAESSTGTWTAVWTDGLTSLDRYKGRCYNIEPVAGEENQYICYVAYPLDLFEEGSVTNMFTSIVGNVFGFKALRALRLEDLRIPPAYTKTFQGPPHGIQVERDKLNKYGRPLLGCTIKPKLGLSAKNYGRAVYECLRGGLDFTKDDENVNSQPFMRWRDRFLFCAEALYKAQAETGEIKGHYLNATAGTCEEMLKRAVFARELGVPIVMHDYLTGGFTANTTLAHYCRDNGLLLHIHRAMHAVIDRQKNHGMHFRVLAKALRLSGGDHIHAGTVVGKLEGERDITLGFVDLLRDDFVEKDRSRGIYFTQDWVSIPGVIPVASGGIHVWHMPALTEIFGDDSVLQFGGGTLGHPWGNAPGAVANRVALEACVQARNEGRDLAREGNEIIREASKWSPELAAACEVWKSIKFEFAAMDTL</sequence>
<comment type="function">
    <text evidence="1">RuBisCO catalyzes two reactions: the carboxylation of D-ribulose 1,5-bisphosphate, the primary event in carbon dioxide fixation, as well as the oxidative fragmentation of the pentose substrate in the photorespiration process. Both reactions occur simultaneously and in competition at the same active site.</text>
</comment>
<comment type="catalytic activity">
    <reaction evidence="1">
        <text>2 (2R)-3-phosphoglycerate + 2 H(+) = D-ribulose 1,5-bisphosphate + CO2 + H2O</text>
        <dbReference type="Rhea" id="RHEA:23124"/>
        <dbReference type="ChEBI" id="CHEBI:15377"/>
        <dbReference type="ChEBI" id="CHEBI:15378"/>
        <dbReference type="ChEBI" id="CHEBI:16526"/>
        <dbReference type="ChEBI" id="CHEBI:57870"/>
        <dbReference type="ChEBI" id="CHEBI:58272"/>
        <dbReference type="EC" id="4.1.1.39"/>
    </reaction>
</comment>
<comment type="catalytic activity">
    <reaction evidence="1">
        <text>D-ribulose 1,5-bisphosphate + O2 = 2-phosphoglycolate + (2R)-3-phosphoglycerate + 2 H(+)</text>
        <dbReference type="Rhea" id="RHEA:36631"/>
        <dbReference type="ChEBI" id="CHEBI:15378"/>
        <dbReference type="ChEBI" id="CHEBI:15379"/>
        <dbReference type="ChEBI" id="CHEBI:57870"/>
        <dbReference type="ChEBI" id="CHEBI:58033"/>
        <dbReference type="ChEBI" id="CHEBI:58272"/>
    </reaction>
</comment>
<comment type="cofactor">
    <cofactor evidence="1">
        <name>Mg(2+)</name>
        <dbReference type="ChEBI" id="CHEBI:18420"/>
    </cofactor>
    <text evidence="1">Binds 1 Mg(2+) ion per subunit.</text>
</comment>
<comment type="subunit">
    <text evidence="1">Heterohexadecamer of 8 large chains and 8 small chains; disulfide-linked. The disulfide link is formed within the large subunit homodimers.</text>
</comment>
<comment type="subcellular location">
    <subcellularLocation>
        <location>Plastid</location>
        <location>Chloroplast</location>
    </subcellularLocation>
</comment>
<comment type="PTM">
    <text evidence="1">The disulfide bond which can form in the large chain dimeric partners within the hexadecamer appears to be associated with oxidative stress and protein turnover.</text>
</comment>
<comment type="miscellaneous">
    <text evidence="1">The basic functional RuBisCO is composed of a large chain homodimer in a 'head-to-tail' conformation. In form I RuBisCO this homodimer is arranged in a barrel-like tetramer with the small subunits forming a tetrameric 'cap' on each end of the 'barrel'.</text>
</comment>
<comment type="similarity">
    <text evidence="1">Belongs to the RuBisCO large chain family. Type I subfamily.</text>
</comment>